<accession>Q9WVG6</accession>
<accession>Q3TYB9</accession>
<accession>Q8K1Y5</accession>
<accession>Q91W24</accession>
<accession>Q99KX8</accession>
<sequence>MAAAAATAVGPGAGSAGVAGPGGAGPCATVSVFPGARLLTIGDANGEIQRHAEQQALRLEVRAGPDAAGIALYSHEDVCVFKCSVSRETECSRVGRQSFIITLGCNSVLIQFATPHDFCSFYNILKTCRGHTLERSVFSERTEESSAVQYFQFYGYLSQQQNMMQDYVRTGTYQRAILQNHTDFKDKIVLDVGCGSGILSFFAAQAGARKIYAVEASTMAQHAEVLVKSNNLTDRIVVIPGKVEEVSLPEQVDIIISEPMGYMLFNERMLESYLHAKKYLKPSGNMFPTIGDVHLAPFTDEQLYMEQFTKANFWYQPSFHGVDLSALRGAAVDEYFRQPVVDTFDIRILMAKSVKYTVNFLEAKEGDLHRIEIPFKFHMLHSGLVHGLAFWFDVAFIGSIMTVWLSTAPTEPLTHWYQVRCLFQSPLFAKAGDTLSGTCLLIANKRQSYDISIVAQVDQTGSKSSNLLDLKNPFFRYTGTTPSPPPGSHYTSPSENMWNTGSTYNLSSGVAVAGMPTAYDLSSVIAGGSSVGHNNLIPLANTGIVNHTHSRMGSIMSTGIVQGSSGAQGGGGSSSAHYAVNNQFTMGGPAISMASPMSIPTNTMHYGS</sequence>
<name>CARM1_MOUSE</name>
<organism>
    <name type="scientific">Mus musculus</name>
    <name type="common">Mouse</name>
    <dbReference type="NCBI Taxonomy" id="10090"/>
    <lineage>
        <taxon>Eukaryota</taxon>
        <taxon>Metazoa</taxon>
        <taxon>Chordata</taxon>
        <taxon>Craniata</taxon>
        <taxon>Vertebrata</taxon>
        <taxon>Euteleostomi</taxon>
        <taxon>Mammalia</taxon>
        <taxon>Eutheria</taxon>
        <taxon>Euarchontoglires</taxon>
        <taxon>Glires</taxon>
        <taxon>Rodentia</taxon>
        <taxon>Myomorpha</taxon>
        <taxon>Muroidea</taxon>
        <taxon>Muridae</taxon>
        <taxon>Murinae</taxon>
        <taxon>Mus</taxon>
        <taxon>Mus</taxon>
    </lineage>
</organism>
<feature type="chain" id="PRO_0000212339" description="Histone-arginine methyltransferase CARM1">
    <location>
        <begin position="1"/>
        <end position="608"/>
    </location>
</feature>
<feature type="domain" description="SAM-dependent MTase PRMT-type" evidence="3">
    <location>
        <begin position="147"/>
        <end position="454"/>
    </location>
</feature>
<feature type="region of interest" description="Interaction with C9orf72" evidence="28">
    <location>
        <begin position="28"/>
        <end position="139"/>
    </location>
</feature>
<feature type="region of interest" description="Required for nuclear translocation" evidence="28">
    <location>
        <begin position="347"/>
        <end position="380"/>
    </location>
</feature>
<feature type="region of interest" description="Transactivation domain" evidence="6">
    <location>
        <begin position="500"/>
        <end position="608"/>
    </location>
</feature>
<feature type="binding site" evidence="23">
    <location>
        <position position="160"/>
    </location>
    <ligand>
        <name>S-adenosyl-L-methionine</name>
        <dbReference type="ChEBI" id="CHEBI:59789"/>
    </ligand>
</feature>
<feature type="binding site" evidence="23">
    <location>
        <position position="169"/>
    </location>
    <ligand>
        <name>S-adenosyl-L-methionine</name>
        <dbReference type="ChEBI" id="CHEBI:59789"/>
    </ligand>
</feature>
<feature type="binding site" evidence="23">
    <location>
        <position position="193"/>
    </location>
    <ligand>
        <name>S-adenosyl-L-methionine</name>
        <dbReference type="ChEBI" id="CHEBI:59789"/>
    </ligand>
</feature>
<feature type="binding site" evidence="23">
    <location>
        <position position="215"/>
    </location>
    <ligand>
        <name>S-adenosyl-L-methionine</name>
        <dbReference type="ChEBI" id="CHEBI:59789"/>
    </ligand>
</feature>
<feature type="binding site" evidence="23">
    <location>
        <position position="244"/>
    </location>
    <ligand>
        <name>S-adenosyl-L-methionine</name>
        <dbReference type="ChEBI" id="CHEBI:59789"/>
    </ligand>
</feature>
<feature type="binding site" evidence="23">
    <location>
        <position position="272"/>
    </location>
    <ligand>
        <name>S-adenosyl-L-methionine</name>
        <dbReference type="ChEBI" id="CHEBI:59789"/>
    </ligand>
</feature>
<feature type="modified residue" description="Phosphoserine" evidence="25">
    <location>
        <position position="217"/>
    </location>
</feature>
<feature type="modified residue" description="Dimethylated arginine" evidence="27">
    <location>
        <position position="551"/>
    </location>
</feature>
<feature type="cross-link" description="Glycyl lysine isopeptide (Lys-Gly) (interchain with G-Cter in ubiquitin)" evidence="2">
    <location>
        <position position="228"/>
    </location>
</feature>
<feature type="splice variant" id="VSP_012508" description="In isoform 2." evidence="29">
    <location>
        <begin position="540"/>
        <end position="562"/>
    </location>
</feature>
<feature type="mutagenesis site" description="Loss of S-adenosyl-L-methionine binding. Loss of protein methyltransferase activity." evidence="25">
    <original>Y</original>
    <variation>A</variation>
    <variation>F</variation>
    <variation>R</variation>
    <location>
        <position position="154"/>
    </location>
</feature>
<feature type="mutagenesis site" description="Loss of protein methyltransferase activity." evidence="26">
    <original>R</original>
    <variation>A</variation>
    <location>
        <position position="169"/>
    </location>
</feature>
<feature type="mutagenesis site" description="Reduces protein methyltransferase activity." evidence="26">
    <original>Y</original>
    <variation>A</variation>
    <location>
        <position position="173"/>
    </location>
</feature>
<feature type="mutagenesis site" description="Abolishes histone methyltransferase activity and coactivator activity." evidence="4 6">
    <original>VLD</original>
    <variation>AAA</variation>
    <location>
        <begin position="189"/>
        <end position="191"/>
    </location>
</feature>
<feature type="mutagenesis site" description="Loss of S-adenosyl-L-methionine binding. Loss of protein methyltransferase activity. Localized in the nucleus." evidence="25">
    <original>S</original>
    <variation>A</variation>
    <location>
        <position position="217"/>
    </location>
</feature>
<feature type="mutagenesis site" description="Loss of S-adenosyl-L-methionine binding. Loss of protein methyltransferase activity." evidence="25">
    <original>S</original>
    <variation>C</variation>
    <variation>T</variation>
    <location>
        <position position="217"/>
    </location>
</feature>
<feature type="mutagenesis site" description="Loss of S-adenosyl-L-methionine binding. Loss of protein methyltransferase activity. Localized in the cytosol." evidence="25">
    <original>S</original>
    <variation>E</variation>
    <location>
        <position position="217"/>
    </location>
</feature>
<feature type="mutagenesis site" description="Abolishes dimerization." evidence="25">
    <original>S</original>
    <variation>E</variation>
    <location>
        <position position="229"/>
    </location>
</feature>
<feature type="mutagenesis site" description="Abolishes histone methyltransferase activity and reduces coactivator activity." evidence="11 12">
    <original>E</original>
    <variation>Q</variation>
    <location>
        <position position="267"/>
    </location>
</feature>
<feature type="mutagenesis site" description="Abolishes dimethylation. Impairs transcription coactivator activity and regulation of alternative splicing. No effect on methyltransferase activity." evidence="27">
    <original>R</original>
    <variation>K</variation>
    <location>
        <position position="551"/>
    </location>
</feature>
<feature type="sequence conflict" description="In Ref. 3; BAE34644." evidence="30" ref="3">
    <original>I</original>
    <variation>L</variation>
    <location>
        <position position="400"/>
    </location>
</feature>
<feature type="helix" evidence="32">
    <location>
        <begin position="137"/>
        <end position="141"/>
    </location>
</feature>
<feature type="helix" evidence="32">
    <location>
        <begin position="144"/>
        <end position="154"/>
    </location>
</feature>
<feature type="helix" evidence="32">
    <location>
        <begin position="157"/>
        <end position="164"/>
    </location>
</feature>
<feature type="helix" evidence="32">
    <location>
        <begin position="167"/>
        <end position="179"/>
    </location>
</feature>
<feature type="helix" evidence="32">
    <location>
        <begin position="181"/>
        <end position="183"/>
    </location>
</feature>
<feature type="turn" evidence="32">
    <location>
        <begin position="184"/>
        <end position="186"/>
    </location>
</feature>
<feature type="strand" evidence="32">
    <location>
        <begin position="188"/>
        <end position="193"/>
    </location>
</feature>
<feature type="turn" evidence="33">
    <location>
        <begin position="195"/>
        <end position="197"/>
    </location>
</feature>
<feature type="helix" evidence="32">
    <location>
        <begin position="198"/>
        <end position="205"/>
    </location>
</feature>
<feature type="strand" evidence="32">
    <location>
        <begin position="209"/>
        <end position="215"/>
    </location>
</feature>
<feature type="helix" evidence="32">
    <location>
        <begin position="219"/>
        <end position="229"/>
    </location>
</feature>
<feature type="turn" evidence="32">
    <location>
        <begin position="233"/>
        <end position="235"/>
    </location>
</feature>
<feature type="strand" evidence="32">
    <location>
        <begin position="236"/>
        <end position="241"/>
    </location>
</feature>
<feature type="turn" evidence="32">
    <location>
        <begin position="243"/>
        <end position="245"/>
    </location>
</feature>
<feature type="strand" evidence="32">
    <location>
        <begin position="252"/>
        <end position="257"/>
    </location>
</feature>
<feature type="turn" evidence="32">
    <location>
        <begin position="265"/>
        <end position="267"/>
    </location>
</feature>
<feature type="helix" evidence="32">
    <location>
        <begin position="269"/>
        <end position="275"/>
    </location>
</feature>
<feature type="helix" evidence="32">
    <location>
        <begin position="276"/>
        <end position="279"/>
    </location>
</feature>
<feature type="strand" evidence="32">
    <location>
        <begin position="280"/>
        <end position="288"/>
    </location>
</feature>
<feature type="strand" evidence="32">
    <location>
        <begin position="290"/>
        <end position="298"/>
    </location>
</feature>
<feature type="helix" evidence="32">
    <location>
        <begin position="301"/>
        <end position="311"/>
    </location>
</feature>
<feature type="helix" evidence="32">
    <location>
        <begin position="312"/>
        <end position="314"/>
    </location>
</feature>
<feature type="strand" evidence="31">
    <location>
        <begin position="319"/>
        <end position="321"/>
    </location>
</feature>
<feature type="helix" evidence="32">
    <location>
        <begin position="325"/>
        <end position="327"/>
    </location>
</feature>
<feature type="helix" evidence="32">
    <location>
        <begin position="328"/>
        <end position="336"/>
    </location>
</feature>
<feature type="strand" evidence="32">
    <location>
        <begin position="340"/>
        <end position="342"/>
    </location>
</feature>
<feature type="helix" evidence="32">
    <location>
        <begin position="346"/>
        <end position="348"/>
    </location>
</feature>
<feature type="strand" evidence="32">
    <location>
        <begin position="354"/>
        <end position="359"/>
    </location>
</feature>
<feature type="turn" evidence="32">
    <location>
        <begin position="360"/>
        <end position="362"/>
    </location>
</feature>
<feature type="helix" evidence="32">
    <location>
        <begin position="365"/>
        <end position="368"/>
    </location>
</feature>
<feature type="strand" evidence="32">
    <location>
        <begin position="369"/>
        <end position="378"/>
    </location>
</feature>
<feature type="strand" evidence="32">
    <location>
        <begin position="383"/>
        <end position="397"/>
    </location>
</feature>
<feature type="strand" evidence="32">
    <location>
        <begin position="402"/>
        <end position="406"/>
    </location>
</feature>
<feature type="strand" evidence="32">
    <location>
        <begin position="418"/>
        <end position="429"/>
    </location>
</feature>
<feature type="strand" evidence="32">
    <location>
        <begin position="434"/>
        <end position="444"/>
    </location>
</feature>
<feature type="turn" evidence="32">
    <location>
        <begin position="445"/>
        <end position="447"/>
    </location>
</feature>
<feature type="strand" evidence="32">
    <location>
        <begin position="448"/>
        <end position="457"/>
    </location>
</feature>
<feature type="turn" evidence="32">
    <location>
        <begin position="458"/>
        <end position="460"/>
    </location>
</feature>
<feature type="strand" evidence="32">
    <location>
        <begin position="463"/>
        <end position="469"/>
    </location>
</feature>
<feature type="turn" evidence="34">
    <location>
        <begin position="493"/>
        <end position="498"/>
    </location>
</feature>
<keyword id="KW-0002">3D-structure</keyword>
<keyword id="KW-0025">Alternative splicing</keyword>
<keyword id="KW-0156">Chromatin regulator</keyword>
<keyword id="KW-0158">Chromosome</keyword>
<keyword id="KW-0963">Cytoplasm</keyword>
<keyword id="KW-1017">Isopeptide bond</keyword>
<keyword id="KW-0488">Methylation</keyword>
<keyword id="KW-0489">Methyltransferase</keyword>
<keyword id="KW-0539">Nucleus</keyword>
<keyword id="KW-0597">Phosphoprotein</keyword>
<keyword id="KW-1185">Reference proteome</keyword>
<keyword id="KW-0949">S-adenosyl-L-methionine</keyword>
<keyword id="KW-0804">Transcription</keyword>
<keyword id="KW-0805">Transcription regulation</keyword>
<keyword id="KW-0808">Transferase</keyword>
<keyword id="KW-0832">Ubl conjugation</keyword>
<dbReference type="EC" id="2.1.1.319" evidence="5 23 25 26 27"/>
<dbReference type="EMBL" id="AF117887">
    <property type="protein sequence ID" value="AAD41265.2"/>
    <property type="molecule type" value="mRNA"/>
</dbReference>
<dbReference type="EMBL" id="BC003964">
    <property type="protein sequence ID" value="AAH03964.1"/>
    <property type="molecule type" value="mRNA"/>
</dbReference>
<dbReference type="EMBL" id="BC008263">
    <property type="protein sequence ID" value="AAH08263.1"/>
    <property type="molecule type" value="mRNA"/>
</dbReference>
<dbReference type="EMBL" id="BC036974">
    <property type="protein sequence ID" value="AAH36974.1"/>
    <property type="molecule type" value="mRNA"/>
</dbReference>
<dbReference type="EMBL" id="AK158757">
    <property type="protein sequence ID" value="BAE34644.1"/>
    <property type="molecule type" value="mRNA"/>
</dbReference>
<dbReference type="CCDS" id="CCDS22906.1">
    <molecule id="Q9WVG6-1"/>
</dbReference>
<dbReference type="CCDS" id="CCDS52736.1">
    <molecule id="Q9WVG6-2"/>
</dbReference>
<dbReference type="RefSeq" id="NP_067506.2">
    <molecule id="Q9WVG6-1"/>
    <property type="nucleotide sequence ID" value="NM_021531.6"/>
</dbReference>
<dbReference type="RefSeq" id="NP_694781.1">
    <molecule id="Q9WVG6-2"/>
    <property type="nucleotide sequence ID" value="NM_153141.1"/>
</dbReference>
<dbReference type="PDB" id="2V74">
    <property type="method" value="X-ray"/>
    <property type="resolution" value="2.70 A"/>
    <property type="chains" value="B/D/F/H=147-490"/>
</dbReference>
<dbReference type="PDB" id="2V7E">
    <property type="method" value="X-ray"/>
    <property type="resolution" value="2.70 A"/>
    <property type="chains" value="A/B=147-490"/>
</dbReference>
<dbReference type="PDB" id="5IH3">
    <property type="method" value="X-ray"/>
    <property type="resolution" value="1.77 A"/>
    <property type="chains" value="A/B/C/D=130-487"/>
</dbReference>
<dbReference type="PDB" id="5IS6">
    <property type="method" value="X-ray"/>
    <property type="resolution" value="2.01 A"/>
    <property type="chains" value="A/B/C/D=130-487"/>
</dbReference>
<dbReference type="PDB" id="5IS7">
    <property type="method" value="X-ray"/>
    <property type="resolution" value="2.29 A"/>
    <property type="chains" value="A/B/C/D=130-487"/>
</dbReference>
<dbReference type="PDB" id="5IS8">
    <property type="method" value="X-ray"/>
    <property type="resolution" value="2.71 A"/>
    <property type="chains" value="A/B/C/D=130-507"/>
</dbReference>
<dbReference type="PDB" id="5IS9">
    <property type="method" value="X-ray"/>
    <property type="resolution" value="2.40 A"/>
    <property type="chains" value="A/B/C/D=130-487"/>
</dbReference>
<dbReference type="PDB" id="5ISA">
    <property type="method" value="X-ray"/>
    <property type="resolution" value="2.40 A"/>
    <property type="chains" value="A/B/C/D=130-490"/>
</dbReference>
<dbReference type="PDB" id="5ISB">
    <property type="method" value="X-ray"/>
    <property type="resolution" value="2.00 A"/>
    <property type="chains" value="A/B/C/D=130-487"/>
</dbReference>
<dbReference type="PDB" id="5ISC">
    <property type="method" value="X-ray"/>
    <property type="resolution" value="2.60 A"/>
    <property type="chains" value="A/B/C/D=130-487"/>
</dbReference>
<dbReference type="PDB" id="5ISD">
    <property type="method" value="X-ray"/>
    <property type="resolution" value="2.60 A"/>
    <property type="chains" value="A/B/C/D=130-487"/>
</dbReference>
<dbReference type="PDB" id="5ISE">
    <property type="method" value="X-ray"/>
    <property type="resolution" value="2.10 A"/>
    <property type="chains" value="A/B/C/D=130-487"/>
</dbReference>
<dbReference type="PDB" id="5ISF">
    <property type="method" value="X-ray"/>
    <property type="resolution" value="2.22 A"/>
    <property type="chains" value="A/B/C/D=130-487"/>
</dbReference>
<dbReference type="PDB" id="5ISG">
    <property type="method" value="X-ray"/>
    <property type="resolution" value="2.42 A"/>
    <property type="chains" value="A/B/C/D=130-487"/>
</dbReference>
<dbReference type="PDB" id="5ISH">
    <property type="method" value="X-ray"/>
    <property type="resolution" value="2.15 A"/>
    <property type="chains" value="A/B/C/D=130-487"/>
</dbReference>
<dbReference type="PDB" id="5ISI">
    <property type="method" value="X-ray"/>
    <property type="resolution" value="2.74 A"/>
    <property type="chains" value="A/B/C/D=130-487"/>
</dbReference>
<dbReference type="PDB" id="5K8V">
    <property type="method" value="X-ray"/>
    <property type="resolution" value="2.25 A"/>
    <property type="chains" value="A/B/C/D=130-487"/>
</dbReference>
<dbReference type="PDB" id="5K8W">
    <property type="method" value="X-ray"/>
    <property type="resolution" value="2.10 A"/>
    <property type="chains" value="A/B/C/D=130-487"/>
</dbReference>
<dbReference type="PDB" id="5K8X">
    <property type="method" value="X-ray"/>
    <property type="resolution" value="1.99 A"/>
    <property type="chains" value="A/B/C/D=130-487"/>
</dbReference>
<dbReference type="PDB" id="5LGP">
    <property type="method" value="X-ray"/>
    <property type="resolution" value="2.04 A"/>
    <property type="chains" value="A/B/C/D=130-487"/>
</dbReference>
<dbReference type="PDB" id="5LGQ">
    <property type="method" value="X-ray"/>
    <property type="resolution" value="2.11 A"/>
    <property type="chains" value="A/B/C/D=130-487"/>
</dbReference>
<dbReference type="PDB" id="5LGR">
    <property type="method" value="X-ray"/>
    <property type="resolution" value="2.00 A"/>
    <property type="chains" value="A/B/C/D=130-487"/>
</dbReference>
<dbReference type="PDB" id="5LGS">
    <property type="method" value="X-ray"/>
    <property type="resolution" value="2.10 A"/>
    <property type="chains" value="A/B/C/D=130-487"/>
</dbReference>
<dbReference type="PDB" id="5LKJ">
    <property type="method" value="X-ray"/>
    <property type="resolution" value="2.60 A"/>
    <property type="chains" value="A/B/C/D=130-497"/>
</dbReference>
<dbReference type="PDB" id="5LV2">
    <property type="method" value="X-ray"/>
    <property type="resolution" value="2.29 A"/>
    <property type="chains" value="A/B/C/D/E/F/G/H=130-487"/>
</dbReference>
<dbReference type="PDB" id="5LV3">
    <property type="method" value="X-ray"/>
    <property type="resolution" value="1.80 A"/>
    <property type="chains" value="A/B/C/D=130-487"/>
</dbReference>
<dbReference type="PDB" id="5NTC">
    <property type="method" value="X-ray"/>
    <property type="resolution" value="2.25 A"/>
    <property type="chains" value="A/B/C/D=130-497"/>
</dbReference>
<dbReference type="PDB" id="5TBH">
    <property type="method" value="X-ray"/>
    <property type="resolution" value="2.34 A"/>
    <property type="chains" value="A/B/C/D=130-487"/>
</dbReference>
<dbReference type="PDB" id="5TBI">
    <property type="method" value="X-ray"/>
    <property type="resolution" value="2.29 A"/>
    <property type="chains" value="A/B/C/D=130-487"/>
</dbReference>
<dbReference type="PDB" id="5TBJ">
    <property type="method" value="X-ray"/>
    <property type="resolution" value="2.32 A"/>
    <property type="chains" value="A/B/C/D=130-487"/>
</dbReference>
<dbReference type="PDB" id="7OKP">
    <property type="method" value="X-ray"/>
    <property type="resolution" value="2.20 A"/>
    <property type="chains" value="A/B/C/D=130-497"/>
</dbReference>
<dbReference type="PDB" id="7OS4">
    <property type="method" value="X-ray"/>
    <property type="resolution" value="2.54 A"/>
    <property type="chains" value="A/B/C/D=130-497"/>
</dbReference>
<dbReference type="PDB" id="7PPQ">
    <property type="method" value="X-ray"/>
    <property type="resolution" value="2.10 A"/>
    <property type="chains" value="A/B/C/D=130-487"/>
</dbReference>
<dbReference type="PDB" id="7PPY">
    <property type="method" value="X-ray"/>
    <property type="resolution" value="2.42 A"/>
    <property type="chains" value="A/B/C/D=130-487"/>
</dbReference>
<dbReference type="PDB" id="7PU8">
    <property type="method" value="X-ray"/>
    <property type="resolution" value="2.19 A"/>
    <property type="chains" value="A/B/C/D=130-487"/>
</dbReference>
<dbReference type="PDB" id="7PUC">
    <property type="method" value="X-ray"/>
    <property type="resolution" value="2.19 A"/>
    <property type="chains" value="A/B/C/D=130-487"/>
</dbReference>
<dbReference type="PDB" id="7PUQ">
    <property type="method" value="X-ray"/>
    <property type="resolution" value="2.09 A"/>
    <property type="chains" value="A/B/C/D=130-486"/>
</dbReference>
<dbReference type="PDB" id="7PV6">
    <property type="method" value="X-ray"/>
    <property type="resolution" value="2.40 A"/>
    <property type="chains" value="A/B/C/D=130-497"/>
</dbReference>
<dbReference type="PDB" id="7QPH">
    <property type="method" value="X-ray"/>
    <property type="resolution" value="1.90 A"/>
    <property type="chains" value="A/B/C/D=130-487"/>
</dbReference>
<dbReference type="PDB" id="7QRD">
    <property type="method" value="X-ray"/>
    <property type="resolution" value="2.00 A"/>
    <property type="chains" value="A/B/C/D=130-507"/>
</dbReference>
<dbReference type="PDBsum" id="2V74"/>
<dbReference type="PDBsum" id="2V7E"/>
<dbReference type="PDBsum" id="5IH3"/>
<dbReference type="PDBsum" id="5IS6"/>
<dbReference type="PDBsum" id="5IS7"/>
<dbReference type="PDBsum" id="5IS8"/>
<dbReference type="PDBsum" id="5IS9"/>
<dbReference type="PDBsum" id="5ISA"/>
<dbReference type="PDBsum" id="5ISB"/>
<dbReference type="PDBsum" id="5ISC"/>
<dbReference type="PDBsum" id="5ISD"/>
<dbReference type="PDBsum" id="5ISE"/>
<dbReference type="PDBsum" id="5ISF"/>
<dbReference type="PDBsum" id="5ISG"/>
<dbReference type="PDBsum" id="5ISH"/>
<dbReference type="PDBsum" id="5ISI"/>
<dbReference type="PDBsum" id="5K8V"/>
<dbReference type="PDBsum" id="5K8W"/>
<dbReference type="PDBsum" id="5K8X"/>
<dbReference type="PDBsum" id="5LGP"/>
<dbReference type="PDBsum" id="5LGQ"/>
<dbReference type="PDBsum" id="5LGR"/>
<dbReference type="PDBsum" id="5LGS"/>
<dbReference type="PDBsum" id="5LKJ"/>
<dbReference type="PDBsum" id="5LV2"/>
<dbReference type="PDBsum" id="5LV3"/>
<dbReference type="PDBsum" id="5NTC"/>
<dbReference type="PDBsum" id="5TBH"/>
<dbReference type="PDBsum" id="5TBI"/>
<dbReference type="PDBsum" id="5TBJ"/>
<dbReference type="PDBsum" id="7OKP"/>
<dbReference type="PDBsum" id="7OS4"/>
<dbReference type="PDBsum" id="7PPQ"/>
<dbReference type="PDBsum" id="7PPY"/>
<dbReference type="PDBsum" id="7PU8"/>
<dbReference type="PDBsum" id="7PUC"/>
<dbReference type="PDBsum" id="7PUQ"/>
<dbReference type="PDBsum" id="7PV6"/>
<dbReference type="PDBsum" id="7QPH"/>
<dbReference type="PDBsum" id="7QRD"/>
<dbReference type="SMR" id="Q9WVG6"/>
<dbReference type="BioGRID" id="208501">
    <property type="interactions" value="34"/>
</dbReference>
<dbReference type="DIP" id="DIP-44593N"/>
<dbReference type="FunCoup" id="Q9WVG6">
    <property type="interactions" value="3763"/>
</dbReference>
<dbReference type="IntAct" id="Q9WVG6">
    <property type="interactions" value="8"/>
</dbReference>
<dbReference type="MINT" id="Q9WVG6"/>
<dbReference type="STRING" id="10090.ENSMUSP00000034703"/>
<dbReference type="BindingDB" id="Q9WVG6"/>
<dbReference type="ChEMBL" id="CHEMBL5538"/>
<dbReference type="GlyGen" id="Q9WVG6">
    <property type="glycosylation" value="6 sites, 1 O-linked glycan (6 sites)"/>
</dbReference>
<dbReference type="iPTMnet" id="Q9WVG6"/>
<dbReference type="PhosphoSitePlus" id="Q9WVG6"/>
<dbReference type="PaxDb" id="10090-ENSMUSP00000034703"/>
<dbReference type="ProteomicsDB" id="279910">
    <molecule id="Q9WVG6-1"/>
</dbReference>
<dbReference type="ProteomicsDB" id="279911">
    <molecule id="Q9WVG6-2"/>
</dbReference>
<dbReference type="Pumba" id="Q9WVG6"/>
<dbReference type="Antibodypedia" id="25589">
    <property type="antibodies" value="644 antibodies from 40 providers"/>
</dbReference>
<dbReference type="DNASU" id="59035"/>
<dbReference type="Ensembl" id="ENSMUST00000034703.15">
    <molecule id="Q9WVG6-1"/>
    <property type="protein sequence ID" value="ENSMUSP00000034703.9"/>
    <property type="gene ID" value="ENSMUSG00000032185.17"/>
</dbReference>
<dbReference type="Ensembl" id="ENSMUST00000115395.10">
    <molecule id="Q9WVG6-2"/>
    <property type="protein sequence ID" value="ENSMUSP00000111053.4"/>
    <property type="gene ID" value="ENSMUSG00000032185.17"/>
</dbReference>
<dbReference type="GeneID" id="59035"/>
<dbReference type="KEGG" id="mmu:59035"/>
<dbReference type="UCSC" id="uc009olu.2">
    <molecule id="Q9WVG6-1"/>
    <property type="organism name" value="mouse"/>
</dbReference>
<dbReference type="UCSC" id="uc009olw.2">
    <molecule id="Q9WVG6-2"/>
    <property type="organism name" value="mouse"/>
</dbReference>
<dbReference type="AGR" id="MGI:1913208"/>
<dbReference type="CTD" id="10498"/>
<dbReference type="MGI" id="MGI:1913208">
    <property type="gene designation" value="Carm1"/>
</dbReference>
<dbReference type="VEuPathDB" id="HostDB:ENSMUSG00000032185"/>
<dbReference type="eggNOG" id="KOG1500">
    <property type="taxonomic scope" value="Eukaryota"/>
</dbReference>
<dbReference type="GeneTree" id="ENSGT00940000160377"/>
<dbReference type="HOGENOM" id="CLU_017375_0_1_1"/>
<dbReference type="InParanoid" id="Q9WVG6"/>
<dbReference type="OMA" id="ASNMAHH"/>
<dbReference type="OrthoDB" id="36813at9989"/>
<dbReference type="PhylomeDB" id="Q9WVG6"/>
<dbReference type="TreeFam" id="TF323332"/>
<dbReference type="BRENDA" id="2.1.1.319">
    <property type="organism ID" value="3474"/>
</dbReference>
<dbReference type="Reactome" id="R-MMU-3214858">
    <property type="pathway name" value="RMTs methylate histone arginines"/>
</dbReference>
<dbReference type="Reactome" id="R-MMU-400206">
    <property type="pathway name" value="Regulation of lipid metabolism by PPARalpha"/>
</dbReference>
<dbReference type="Reactome" id="R-MMU-9018519">
    <property type="pathway name" value="Estrogen-dependent gene expression"/>
</dbReference>
<dbReference type="Reactome" id="R-MMU-9707564">
    <property type="pathway name" value="Cytoprotection by HMOX1"/>
</dbReference>
<dbReference type="BioGRID-ORCS" id="59035">
    <property type="hits" value="15 hits in 87 CRISPR screens"/>
</dbReference>
<dbReference type="CD-CODE" id="81B83C9C">
    <property type="entry name" value="Paraspeckle"/>
</dbReference>
<dbReference type="ChiTaRS" id="Carm1">
    <property type="organism name" value="mouse"/>
</dbReference>
<dbReference type="EvolutionaryTrace" id="Q9WVG6"/>
<dbReference type="PRO" id="PR:Q9WVG6"/>
<dbReference type="Proteomes" id="UP000000589">
    <property type="component" value="Chromosome 9"/>
</dbReference>
<dbReference type="RNAct" id="Q9WVG6">
    <property type="molecule type" value="protein"/>
</dbReference>
<dbReference type="Bgee" id="ENSMUSG00000032185">
    <property type="expression patterns" value="Expressed in internal carotid artery and 274 other cell types or tissues"/>
</dbReference>
<dbReference type="ExpressionAtlas" id="Q9WVG6">
    <property type="expression patterns" value="baseline and differential"/>
</dbReference>
<dbReference type="GO" id="GO:0005829">
    <property type="term" value="C:cytosol"/>
    <property type="evidence" value="ECO:0000314"/>
    <property type="project" value="UniProtKB"/>
</dbReference>
<dbReference type="GO" id="GO:0043596">
    <property type="term" value="C:nuclear replication fork"/>
    <property type="evidence" value="ECO:0000250"/>
    <property type="project" value="UniProtKB"/>
</dbReference>
<dbReference type="GO" id="GO:0005634">
    <property type="term" value="C:nucleus"/>
    <property type="evidence" value="ECO:0000314"/>
    <property type="project" value="UniProtKB"/>
</dbReference>
<dbReference type="GO" id="GO:0032991">
    <property type="term" value="C:protein-containing complex"/>
    <property type="evidence" value="ECO:0000314"/>
    <property type="project" value="MGI"/>
</dbReference>
<dbReference type="GO" id="GO:0090575">
    <property type="term" value="C:RNA polymerase II transcription regulator complex"/>
    <property type="evidence" value="ECO:0000314"/>
    <property type="project" value="MGI"/>
</dbReference>
<dbReference type="GO" id="GO:0035642">
    <property type="term" value="F:histone H3R17 methyltransferase activity"/>
    <property type="evidence" value="ECO:0000314"/>
    <property type="project" value="UniProtKB"/>
</dbReference>
<dbReference type="GO" id="GO:0070611">
    <property type="term" value="F:histone H3R2 methyltransferase activity"/>
    <property type="evidence" value="ECO:0000314"/>
    <property type="project" value="UniProtKB"/>
</dbReference>
<dbReference type="GO" id="GO:0140903">
    <property type="term" value="F:histone H3R26 methyltransferase activity"/>
    <property type="evidence" value="ECO:0000314"/>
    <property type="project" value="UniProtKB"/>
</dbReference>
<dbReference type="GO" id="GO:0042054">
    <property type="term" value="F:histone methyltransferase activity"/>
    <property type="evidence" value="ECO:0000314"/>
    <property type="project" value="MGI"/>
</dbReference>
<dbReference type="GO" id="GO:0008276">
    <property type="term" value="F:protein methyltransferase activity"/>
    <property type="evidence" value="ECO:0000314"/>
    <property type="project" value="MGI"/>
</dbReference>
<dbReference type="GO" id="GO:0016274">
    <property type="term" value="F:protein-arginine N-methyltransferase activity"/>
    <property type="evidence" value="ECO:0000314"/>
    <property type="project" value="UniProtKB"/>
</dbReference>
<dbReference type="GO" id="GO:0035242">
    <property type="term" value="F:protein-arginine omega-N asymmetric methyltransferase activity"/>
    <property type="evidence" value="ECO:0000314"/>
    <property type="project" value="UniProtKB"/>
</dbReference>
<dbReference type="GO" id="GO:0000976">
    <property type="term" value="F:transcription cis-regulatory region binding"/>
    <property type="evidence" value="ECO:0000315"/>
    <property type="project" value="UniProtKB"/>
</dbReference>
<dbReference type="GO" id="GO:0003713">
    <property type="term" value="F:transcription coactivator activity"/>
    <property type="evidence" value="ECO:0000314"/>
    <property type="project" value="UniProtKB"/>
</dbReference>
<dbReference type="GO" id="GO:0008283">
    <property type="term" value="P:cell population proliferation"/>
    <property type="evidence" value="ECO:0000315"/>
    <property type="project" value="MGI"/>
</dbReference>
<dbReference type="GO" id="GO:0060350">
    <property type="term" value="P:endochondral bone morphogenesis"/>
    <property type="evidence" value="ECO:0000315"/>
    <property type="project" value="MGI"/>
</dbReference>
<dbReference type="GO" id="GO:0030520">
    <property type="term" value="P:estrogen receptor signaling pathway"/>
    <property type="evidence" value="ECO:0000316"/>
    <property type="project" value="MGI"/>
</dbReference>
<dbReference type="GO" id="GO:0032259">
    <property type="term" value="P:methylation"/>
    <property type="evidence" value="ECO:0007669"/>
    <property type="project" value="UniProtKB-KW"/>
</dbReference>
<dbReference type="GO" id="GO:0030518">
    <property type="term" value="P:nuclear receptor-mediated steroid hormone signaling pathway"/>
    <property type="evidence" value="ECO:0000314"/>
    <property type="project" value="HGNC-UCL"/>
</dbReference>
<dbReference type="GO" id="GO:0008284">
    <property type="term" value="P:positive regulation of cell population proliferation"/>
    <property type="evidence" value="ECO:0000315"/>
    <property type="project" value="MGI"/>
</dbReference>
<dbReference type="GO" id="GO:0045600">
    <property type="term" value="P:positive regulation of fat cell differentiation"/>
    <property type="evidence" value="ECO:0000315"/>
    <property type="project" value="UniProtKB"/>
</dbReference>
<dbReference type="GO" id="GO:0045944">
    <property type="term" value="P:positive regulation of transcription by RNA polymerase II"/>
    <property type="evidence" value="ECO:0000316"/>
    <property type="project" value="MGI"/>
</dbReference>
<dbReference type="GO" id="GO:0071168">
    <property type="term" value="P:protein localization to chromatin"/>
    <property type="evidence" value="ECO:0000315"/>
    <property type="project" value="MGI"/>
</dbReference>
<dbReference type="GO" id="GO:0006355">
    <property type="term" value="P:regulation of DNA-templated transcription"/>
    <property type="evidence" value="ECO:0000314"/>
    <property type="project" value="MGI"/>
</dbReference>
<dbReference type="GO" id="GO:0003420">
    <property type="term" value="P:regulation of growth plate cartilage chondrocyte proliferation"/>
    <property type="evidence" value="ECO:0000315"/>
    <property type="project" value="MGI"/>
</dbReference>
<dbReference type="GO" id="GO:0033146">
    <property type="term" value="P:regulation of intracellular estrogen receptor signaling pathway"/>
    <property type="evidence" value="ECO:0000314"/>
    <property type="project" value="UniProtKB"/>
</dbReference>
<dbReference type="GO" id="GO:0071932">
    <property type="term" value="P:replication fork reversal"/>
    <property type="evidence" value="ECO:0000250"/>
    <property type="project" value="UniProtKB"/>
</dbReference>
<dbReference type="CDD" id="cd02440">
    <property type="entry name" value="AdoMet_MTases"/>
    <property type="match status" value="1"/>
</dbReference>
<dbReference type="CDD" id="cd13330">
    <property type="entry name" value="PH_CARM1"/>
    <property type="match status" value="1"/>
</dbReference>
<dbReference type="FunFam" id="2.30.29.30:FF:000235">
    <property type="entry name" value="Coactivator-associated arginine methyltransferase 1"/>
    <property type="match status" value="1"/>
</dbReference>
<dbReference type="FunFam" id="2.70.160.11:FF:000002">
    <property type="entry name" value="Probable histone-arginine methyltransferase CARM1"/>
    <property type="match status" value="1"/>
</dbReference>
<dbReference type="FunFam" id="3.40.50.150:FF:000031">
    <property type="entry name" value="Putative Histone-arginine methyltransferase CARM1"/>
    <property type="match status" value="1"/>
</dbReference>
<dbReference type="Gene3D" id="2.70.160.11">
    <property type="entry name" value="Hnrnp arginine n-methyltransferase1"/>
    <property type="match status" value="1"/>
</dbReference>
<dbReference type="Gene3D" id="2.30.29.30">
    <property type="entry name" value="Pleckstrin-homology domain (PH domain)/Phosphotyrosine-binding domain (PTB)"/>
    <property type="match status" value="1"/>
</dbReference>
<dbReference type="Gene3D" id="3.40.50.150">
    <property type="entry name" value="Vaccinia Virus protein VP39"/>
    <property type="match status" value="1"/>
</dbReference>
<dbReference type="InterPro" id="IPR025799">
    <property type="entry name" value="Arg_MeTrfase"/>
</dbReference>
<dbReference type="InterPro" id="IPR020989">
    <property type="entry name" value="Histone-Arg_MeTrfase_N"/>
</dbReference>
<dbReference type="InterPro" id="IPR011993">
    <property type="entry name" value="PH-like_dom_sf"/>
</dbReference>
<dbReference type="InterPro" id="IPR055135">
    <property type="entry name" value="PRMT_dom"/>
</dbReference>
<dbReference type="InterPro" id="IPR029063">
    <property type="entry name" value="SAM-dependent_MTases_sf"/>
</dbReference>
<dbReference type="PANTHER" id="PTHR11006:SF51">
    <property type="entry name" value="HISTONE-ARGININE METHYLTRANSFERASE CARM1"/>
    <property type="match status" value="1"/>
</dbReference>
<dbReference type="PANTHER" id="PTHR11006">
    <property type="entry name" value="PROTEIN ARGININE N-METHYLTRANSFERASE"/>
    <property type="match status" value="1"/>
</dbReference>
<dbReference type="Pfam" id="PF11531">
    <property type="entry name" value="CARM1"/>
    <property type="match status" value="1"/>
</dbReference>
<dbReference type="Pfam" id="PF06325">
    <property type="entry name" value="PrmA"/>
    <property type="match status" value="1"/>
</dbReference>
<dbReference type="Pfam" id="PF22528">
    <property type="entry name" value="PRMT_C"/>
    <property type="match status" value="1"/>
</dbReference>
<dbReference type="SUPFAM" id="SSF53335">
    <property type="entry name" value="S-adenosyl-L-methionine-dependent methyltransferases"/>
    <property type="match status" value="1"/>
</dbReference>
<dbReference type="PROSITE" id="PS51678">
    <property type="entry name" value="SAM_MT_PRMT"/>
    <property type="match status" value="1"/>
</dbReference>
<proteinExistence type="evidence at protein level"/>
<comment type="function">
    <text evidence="2 4 5 6 7 8 9 10 11 12 13 14 15 16 17 18 19 20 22 23 24 25 26 27 28">Methylates (mono- and asymmetric dimethylation) the guanidino nitrogens of arginyl residues in several proteins involved in DNA packaging, transcription regulation, pre-mRNA splicing, and mRNA stability (PubMed:10381882, PubMed:11341840, PubMed:11997499, PubMed:14966289, PubMed:17218272, PubMed:19897492, PubMed:21138967). Recruited to promoters upon gene activation together with histone acetyltransferases from EP300/P300 and p160 families, methylates histone H3 at 'Arg-17' (H3R17me), forming mainly asymmetric dimethylarginine (H3R17me2a), leading to activation of transcription via chromatin remodeling (PubMed:10381882, PubMed:11341840, PubMed:11747826, PubMed:11751582, PubMed:11997499, PubMed:12498683, PubMed:15339660, PubMed:15616592). During nuclear hormone receptor activation and TCF7L2/TCF4 activation, acts synergically with EP300/P300 and either one of the p160 histone acetyltransferases NCOA1/SRC1, NCOA2/GRIP1 and NCOA3/ACTR or CTNNB1/beta-catenin to activate transcription (PubMed:11997499, PubMed:16322096, PubMed:17882261, PubMed:19843527). During myogenic transcriptional activation, acts together with NCOA3/ACTR as a coactivator for MEF2C (PubMed:11713257). During monocyte inflammatory stimulation, acts together with EP300/P300 as a coactivator for NF-kappa-B (PubMed:11983685). Acts as a coactivator for PPARG, promotes adipocyte differentiation and the accumulation of brown fat tissue (PubMed:18188184). Plays a role in the regulation of pre-mRNA alternative splicing by methylation of splicing factors (PubMed:21138967). Also seems to be involved in p53/TP53 transcriptional activation (PubMed:15186775). Methylates EP300/P300, both at 'Arg-2142', which may loosen its interaction with NCOA2/GRIP1, and at 'Arg-580' and 'Arg-604' in the KIX domain, which impairs its interaction with CREB and inhibits CREB-dependent transcriptional activation (PubMed:11701890). Also methylates arginine residues in RNA-binding proteins PABPC1, ELAVL1 and ELAV4, which may affect their mRNA-stabilizing properties and the half-life of their target mRNAs (PubMed:11850402, PubMed:12237300, PubMed:12756295). Acts as a transcriptional coactivator of ACACA/acetyl-CoA carboxylase by enriching H3R17 methylation at its promoter, thereby positively regulating fatty acid synthesis (PubMed:30366907). Independently of its methyltransferase activity, involved in replication fork progression: promotes PARP1 recruitment to replication forks, leading to poly-ADP-ribosylation of chromatin at replication forks and reduced fork speed (By similarity).</text>
</comment>
<comment type="catalytic activity">
    <reaction evidence="5 23 25 26 27">
        <text>L-arginyl-[protein] + 2 S-adenosyl-L-methionine = N(omega),N(omega)-dimethyl-L-arginyl-[protein] + 2 S-adenosyl-L-homocysteine + 2 H(+)</text>
        <dbReference type="Rhea" id="RHEA:48096"/>
        <dbReference type="Rhea" id="RHEA-COMP:10532"/>
        <dbReference type="Rhea" id="RHEA-COMP:11991"/>
        <dbReference type="ChEBI" id="CHEBI:15378"/>
        <dbReference type="ChEBI" id="CHEBI:29965"/>
        <dbReference type="ChEBI" id="CHEBI:57856"/>
        <dbReference type="ChEBI" id="CHEBI:59789"/>
        <dbReference type="ChEBI" id="CHEBI:61897"/>
        <dbReference type="EC" id="2.1.1.319"/>
    </reaction>
</comment>
<comment type="activity regulation">
    <text evidence="23">Methylation of H3R17 (H3R17me) by CARM1 is stimulated by preacetylation of H3 'Lys-18' (H3K18ac) H3 'Lys-23' (H3K23ac) by EP300 and blocked by citrullination of H3 'Arg-17' (H3R17ci) by PADI4.</text>
</comment>
<comment type="subunit">
    <text evidence="1 2 4 6 7 11 12 16 17 19 20 23 25 26 28">Homodimer (PubMed:17882261, PubMed:19897492). Interacts with NR1H4 (By similarity). Interacts with SNRPC (By similarity). Interacts with the C-terminus of NCOA2/GRIP1, NCO3/ACTR and NCOA1/SRC1 (PubMed:10381882). Part of a complex consisting of CARM1, EP300/P300 and NCOA2/GRIP1 (PubMed:11997499). Interacts with FLII, TP53, myogenic factor MEF2, EP300/P300, TRIM24, CREBBP and CTNNB1 (PubMed:11701890, PubMed:11713257, PubMed:11983685, PubMed:11997499, PubMed:14966289, PubMed:15186775, PubMed:16322096, PubMed:19843527). Interacts with RELA (PubMed:15616592). Identified in a complex containing CARM1, TRIM24 and NCOA2/GRIP1 (PubMed:16322096). Interacts with NCOA3/SRC3 (PubMed:19843527). Interacts with SKP2 (PubMed:30366907). Interacts (via PH domain-like fold) with C9orf72 (PubMed:30366907). Interacts with PARP1; promoting PARP1 recruimtent to replication forks (By similarity).</text>
</comment>
<comment type="subcellular location">
    <subcellularLocation>
        <location evidence="7 25 28">Nucleus</location>
    </subcellularLocation>
    <subcellularLocation>
        <location evidence="7 25 28">Cytoplasm</location>
    </subcellularLocation>
    <subcellularLocation>
        <location evidence="2">Chromosome</location>
    </subcellularLocation>
    <text evidence="2">Mainly nuclear during the G1, S and G2 phases of the cell cycle. Cytoplasmic during mitosis, after breakup of the nuclear membrane. Localizes to replication forks.</text>
</comment>
<comment type="alternative products">
    <event type="alternative splicing"/>
    <isoform>
        <id>Q9WVG6-1</id>
        <name>1</name>
        <sequence type="displayed"/>
    </isoform>
    <isoform>
        <id>Q9WVG6-2</id>
        <name>2</name>
        <sequence type="described" ref="VSP_012508"/>
    </isoform>
</comment>
<comment type="tissue specificity">
    <text evidence="4 21">Ubiquitously expressed. Within the brain, present in proliferating cells from lateral ventricular zone and dentate gyrus (at protein level).</text>
</comment>
<comment type="developmental stage">
    <text evidence="7">At 9 dpc, expression is prominent in the neural tube and somites.</text>
</comment>
<comment type="PTM">
    <text evidence="2 25">Phosphorylation at Ser-217 is strongly increased during mitosis, and decreases rapidly to a very low, basal level after entry into the G1 phase of the cell cycle (By similarity). Phosphorylation at Ser-217 interferes with S-adenosyl-L-methionine binding and strongly reduces methyltransferase activity. Phosphorylation at Ser-217 may promote cytosolic location (PubMed:19843527).</text>
</comment>
<comment type="PTM">
    <text evidence="27">Auto-methylated on Arg-551. Methylation enhances transcription coactivator activity. Methylation is required for its role in the regulation of pre-mRNA alternative splicing.</text>
</comment>
<comment type="PTM">
    <text evidence="2">Ubiquitinated by E3 ubiquitin-protein ligase complex containing FBXO9 at Lys-228; leading to proteasomal degradation.</text>
</comment>
<comment type="disruption phenotype">
    <text evidence="15 24 26">Neonatal lethality. The lungs of neonates do not inflate and they do not breathe. The same neonate lethality is observed with mutants that produce CARM1 protein without enzyme activity. Embryos are distinctly smaller at 18.5 dpc. They show reduced lipid accumulation in brown adipose tissue and reduced amounts of brown adipose tissue. Thymocyte differentiation is blocked at an early stage. Mutants display complete loss of protein methylation of the CARM1 substrates PABPC1 and EP300/P300.</text>
</comment>
<comment type="similarity">
    <text evidence="3">Belongs to the class I-like SAM-binding methyltransferase superfamily. Protein arginine N-methyltransferase family.</text>
</comment>
<evidence type="ECO:0000250" key="1">
    <source>
        <dbReference type="UniProtKB" id="Q4AE70"/>
    </source>
</evidence>
<evidence type="ECO:0000250" key="2">
    <source>
        <dbReference type="UniProtKB" id="Q86X55"/>
    </source>
</evidence>
<evidence type="ECO:0000255" key="3">
    <source>
        <dbReference type="PROSITE-ProRule" id="PRU01015"/>
    </source>
</evidence>
<evidence type="ECO:0000269" key="4">
    <source>
    </source>
</evidence>
<evidence type="ECO:0000269" key="5">
    <source>
    </source>
</evidence>
<evidence type="ECO:0000269" key="6">
    <source>
    </source>
</evidence>
<evidence type="ECO:0000269" key="7">
    <source>
    </source>
</evidence>
<evidence type="ECO:0000269" key="8">
    <source>
    </source>
</evidence>
<evidence type="ECO:0000269" key="9">
    <source>
    </source>
</evidence>
<evidence type="ECO:0000269" key="10">
    <source>
    </source>
</evidence>
<evidence type="ECO:0000269" key="11">
    <source>
    </source>
</evidence>
<evidence type="ECO:0000269" key="12">
    <source>
    </source>
</evidence>
<evidence type="ECO:0000269" key="13">
    <source>
    </source>
</evidence>
<evidence type="ECO:0000269" key="14">
    <source>
    </source>
</evidence>
<evidence type="ECO:0000269" key="15">
    <source>
    </source>
</evidence>
<evidence type="ECO:0000269" key="16">
    <source>
    </source>
</evidence>
<evidence type="ECO:0000269" key="17">
    <source>
    </source>
</evidence>
<evidence type="ECO:0000269" key="18">
    <source>
    </source>
</evidence>
<evidence type="ECO:0000269" key="19">
    <source>
    </source>
</evidence>
<evidence type="ECO:0000269" key="20">
    <source>
    </source>
</evidence>
<evidence type="ECO:0000269" key="21">
    <source>
    </source>
</evidence>
<evidence type="ECO:0000269" key="22">
    <source>
    </source>
</evidence>
<evidence type="ECO:0000269" key="23">
    <source>
    </source>
</evidence>
<evidence type="ECO:0000269" key="24">
    <source>
    </source>
</evidence>
<evidence type="ECO:0000269" key="25">
    <source>
    </source>
</evidence>
<evidence type="ECO:0000269" key="26">
    <source>
    </source>
</evidence>
<evidence type="ECO:0000269" key="27">
    <source>
    </source>
</evidence>
<evidence type="ECO:0000269" key="28">
    <source>
    </source>
</evidence>
<evidence type="ECO:0000303" key="29">
    <source>
    </source>
</evidence>
<evidence type="ECO:0000305" key="30"/>
<evidence type="ECO:0007829" key="31">
    <source>
        <dbReference type="PDB" id="2V74"/>
    </source>
</evidence>
<evidence type="ECO:0007829" key="32">
    <source>
        <dbReference type="PDB" id="5IH3"/>
    </source>
</evidence>
<evidence type="ECO:0007829" key="33">
    <source>
        <dbReference type="PDB" id="5K8V"/>
    </source>
</evidence>
<evidence type="ECO:0007829" key="34">
    <source>
        <dbReference type="PDB" id="7QRD"/>
    </source>
</evidence>
<reference key="1">
    <citation type="journal article" date="1999" name="Science">
        <title>Regulation of transcription by a protein methyltransferase.</title>
        <authorList>
            <person name="Chen D."/>
            <person name="Ma H."/>
            <person name="Hong H."/>
            <person name="Koh S.S."/>
            <person name="Huang S.-M."/>
            <person name="Schurter B.T."/>
            <person name="Aswad D.W."/>
            <person name="Stallcup M.R."/>
        </authorList>
    </citation>
    <scope>NUCLEOTIDE SEQUENCE [MRNA] (ISOFORM 1)</scope>
    <scope>MUTAGENESIS OF 189-VAL--ASP-191</scope>
    <scope>FUNCTION</scope>
    <scope>TISSUE SPECIFICITY</scope>
    <scope>METHYLATION OF HISTONE H3</scope>
    <scope>INTERACTION WITH NCOA1; NCOA2 AND NCOA3</scope>
    <source>
        <tissue>Embryo</tissue>
    </source>
</reference>
<reference key="2">
    <citation type="journal article" date="2004" name="Genome Res.">
        <title>The status, quality, and expansion of the NIH full-length cDNA project: the Mammalian Gene Collection (MGC).</title>
        <authorList>
            <consortium name="The MGC Project Team"/>
        </authorList>
    </citation>
    <scope>NUCLEOTIDE SEQUENCE [LARGE SCALE MRNA] (ISOFORM 2)</scope>
    <scope>NUCLEOTIDE SEQUENCE [LARGE SCALE MRNA] OF 261-608 (ISOFORM 1)</scope>
    <source>
        <strain>FVB/N</strain>
        <tissue>Mammary gland</tissue>
        <tissue>Mammary tumor</tissue>
    </source>
</reference>
<reference key="3">
    <citation type="journal article" date="2005" name="Science">
        <title>The transcriptional landscape of the mammalian genome.</title>
        <authorList>
            <person name="Carninci P."/>
            <person name="Kasukawa T."/>
            <person name="Katayama S."/>
            <person name="Gough J."/>
            <person name="Frith M.C."/>
            <person name="Maeda N."/>
            <person name="Oyama R."/>
            <person name="Ravasi T."/>
            <person name="Lenhard B."/>
            <person name="Wells C."/>
            <person name="Kodzius R."/>
            <person name="Shimokawa K."/>
            <person name="Bajic V.B."/>
            <person name="Brenner S.E."/>
            <person name="Batalov S."/>
            <person name="Forrest A.R."/>
            <person name="Zavolan M."/>
            <person name="Davis M.J."/>
            <person name="Wilming L.G."/>
            <person name="Aidinis V."/>
            <person name="Allen J.E."/>
            <person name="Ambesi-Impiombato A."/>
            <person name="Apweiler R."/>
            <person name="Aturaliya R.N."/>
            <person name="Bailey T.L."/>
            <person name="Bansal M."/>
            <person name="Baxter L."/>
            <person name="Beisel K.W."/>
            <person name="Bersano T."/>
            <person name="Bono H."/>
            <person name="Chalk A.M."/>
            <person name="Chiu K.P."/>
            <person name="Choudhary V."/>
            <person name="Christoffels A."/>
            <person name="Clutterbuck D.R."/>
            <person name="Crowe M.L."/>
            <person name="Dalla E."/>
            <person name="Dalrymple B.P."/>
            <person name="de Bono B."/>
            <person name="Della Gatta G."/>
            <person name="di Bernardo D."/>
            <person name="Down T."/>
            <person name="Engstrom P."/>
            <person name="Fagiolini M."/>
            <person name="Faulkner G."/>
            <person name="Fletcher C.F."/>
            <person name="Fukushima T."/>
            <person name="Furuno M."/>
            <person name="Futaki S."/>
            <person name="Gariboldi M."/>
            <person name="Georgii-Hemming P."/>
            <person name="Gingeras T.R."/>
            <person name="Gojobori T."/>
            <person name="Green R.E."/>
            <person name="Gustincich S."/>
            <person name="Harbers M."/>
            <person name="Hayashi Y."/>
            <person name="Hensch T.K."/>
            <person name="Hirokawa N."/>
            <person name="Hill D."/>
            <person name="Huminiecki L."/>
            <person name="Iacono M."/>
            <person name="Ikeo K."/>
            <person name="Iwama A."/>
            <person name="Ishikawa T."/>
            <person name="Jakt M."/>
            <person name="Kanapin A."/>
            <person name="Katoh M."/>
            <person name="Kawasawa Y."/>
            <person name="Kelso J."/>
            <person name="Kitamura H."/>
            <person name="Kitano H."/>
            <person name="Kollias G."/>
            <person name="Krishnan S.P."/>
            <person name="Kruger A."/>
            <person name="Kummerfeld S.K."/>
            <person name="Kurochkin I.V."/>
            <person name="Lareau L.F."/>
            <person name="Lazarevic D."/>
            <person name="Lipovich L."/>
            <person name="Liu J."/>
            <person name="Liuni S."/>
            <person name="McWilliam S."/>
            <person name="Madan Babu M."/>
            <person name="Madera M."/>
            <person name="Marchionni L."/>
            <person name="Matsuda H."/>
            <person name="Matsuzawa S."/>
            <person name="Miki H."/>
            <person name="Mignone F."/>
            <person name="Miyake S."/>
            <person name="Morris K."/>
            <person name="Mottagui-Tabar S."/>
            <person name="Mulder N."/>
            <person name="Nakano N."/>
            <person name="Nakauchi H."/>
            <person name="Ng P."/>
            <person name="Nilsson R."/>
            <person name="Nishiguchi S."/>
            <person name="Nishikawa S."/>
            <person name="Nori F."/>
            <person name="Ohara O."/>
            <person name="Okazaki Y."/>
            <person name="Orlando V."/>
            <person name="Pang K.C."/>
            <person name="Pavan W.J."/>
            <person name="Pavesi G."/>
            <person name="Pesole G."/>
            <person name="Petrovsky N."/>
            <person name="Piazza S."/>
            <person name="Reed J."/>
            <person name="Reid J.F."/>
            <person name="Ring B.Z."/>
            <person name="Ringwald M."/>
            <person name="Rost B."/>
            <person name="Ruan Y."/>
            <person name="Salzberg S.L."/>
            <person name="Sandelin A."/>
            <person name="Schneider C."/>
            <person name="Schoenbach C."/>
            <person name="Sekiguchi K."/>
            <person name="Semple C.A."/>
            <person name="Seno S."/>
            <person name="Sessa L."/>
            <person name="Sheng Y."/>
            <person name="Shibata Y."/>
            <person name="Shimada H."/>
            <person name="Shimada K."/>
            <person name="Silva D."/>
            <person name="Sinclair B."/>
            <person name="Sperling S."/>
            <person name="Stupka E."/>
            <person name="Sugiura K."/>
            <person name="Sultana R."/>
            <person name="Takenaka Y."/>
            <person name="Taki K."/>
            <person name="Tammoja K."/>
            <person name="Tan S.L."/>
            <person name="Tang S."/>
            <person name="Taylor M.S."/>
            <person name="Tegner J."/>
            <person name="Teichmann S.A."/>
            <person name="Ueda H.R."/>
            <person name="van Nimwegen E."/>
            <person name="Verardo R."/>
            <person name="Wei C.L."/>
            <person name="Yagi K."/>
            <person name="Yamanishi H."/>
            <person name="Zabarovsky E."/>
            <person name="Zhu S."/>
            <person name="Zimmer A."/>
            <person name="Hide W."/>
            <person name="Bult C."/>
            <person name="Grimmond S.M."/>
            <person name="Teasdale R.D."/>
            <person name="Liu E.T."/>
            <person name="Brusic V."/>
            <person name="Quackenbush J."/>
            <person name="Wahlestedt C."/>
            <person name="Mattick J.S."/>
            <person name="Hume D.A."/>
            <person name="Kai C."/>
            <person name="Sasaki D."/>
            <person name="Tomaru Y."/>
            <person name="Fukuda S."/>
            <person name="Kanamori-Katayama M."/>
            <person name="Suzuki M."/>
            <person name="Aoki J."/>
            <person name="Arakawa T."/>
            <person name="Iida J."/>
            <person name="Imamura K."/>
            <person name="Itoh M."/>
            <person name="Kato T."/>
            <person name="Kawaji H."/>
            <person name="Kawagashira N."/>
            <person name="Kawashima T."/>
            <person name="Kojima M."/>
            <person name="Kondo S."/>
            <person name="Konno H."/>
            <person name="Nakano K."/>
            <person name="Ninomiya N."/>
            <person name="Nishio T."/>
            <person name="Okada M."/>
            <person name="Plessy C."/>
            <person name="Shibata K."/>
            <person name="Shiraki T."/>
            <person name="Suzuki S."/>
            <person name="Tagami M."/>
            <person name="Waki K."/>
            <person name="Watahiki A."/>
            <person name="Okamura-Oho Y."/>
            <person name="Suzuki H."/>
            <person name="Kawai J."/>
            <person name="Hayashizaki Y."/>
        </authorList>
    </citation>
    <scope>NUCLEOTIDE SEQUENCE [LARGE SCALE MRNA] OF 17-608 (ISOFORM 1)</scope>
    <source>
        <strain>C57BL/6J</strain>
        <tissue>Visual cortex</tissue>
    </source>
</reference>
<reference key="4">
    <citation type="journal article" date="2001" name="Biochemistry">
        <title>Methylation of histone H3 by coactivator-associated arginine methyltransferase 1.</title>
        <authorList>
            <person name="Schurter B.T."/>
            <person name="Koh S.S."/>
            <person name="Chen D."/>
            <person name="Bunick G.J."/>
            <person name="Harp J.M."/>
            <person name="Hanson B.L."/>
            <person name="Henschen-Edman A."/>
            <person name="Mackay D.R."/>
            <person name="Stallcup M.R."/>
            <person name="Aswad D.W."/>
        </authorList>
    </citation>
    <scope>FUNCTION IN METHYLATION OF HISTONE H3</scope>
    <scope>CATALYTIC ACTIVITY</scope>
</reference>
<reference key="5">
    <citation type="journal article" date="2001" name="Curr. Biol.">
        <title>Hormone-dependent, CARM1-directed, arginine-specific methylation of histone H3 on a steroid-regulated promoter.</title>
        <authorList>
            <person name="Ma H."/>
            <person name="Baumann C.T."/>
            <person name="Li H."/>
            <person name="Strahl B.D."/>
            <person name="Rice R."/>
            <person name="Jelinek M.A."/>
            <person name="Aswad D.W."/>
            <person name="Allis C.D."/>
            <person name="Hager G.L."/>
            <person name="Stallcup M.R."/>
        </authorList>
    </citation>
    <scope>FUNCTION IN METHYLATION OF HISTONE H3</scope>
</reference>
<reference key="6">
    <citation type="journal article" date="2001" name="Science">
        <title>A transcriptional switch mediated by cofactor methylation.</title>
        <authorList>
            <person name="Xu W."/>
            <person name="Chen H."/>
            <person name="Du K."/>
            <person name="Asahara H."/>
            <person name="Tini M."/>
            <person name="Emerson B.M."/>
            <person name="Montminy M."/>
            <person name="Evans R.M."/>
        </authorList>
    </citation>
    <scope>FUNCTION</scope>
    <scope>FUNCTION IN METHYLATION OF EP300 AND CREBBP</scope>
    <scope>MUTAGENESIS OF 189-VAL--ASP-191</scope>
    <scope>INTERACTION WITH EP300 AND CREBBP</scope>
</reference>
<reference key="7">
    <citation type="journal article" date="2002" name="Curr. Biol.">
        <title>Crosstalk between CARM1 methylation and CBP acetylation on histone H3.</title>
        <authorList>
            <person name="Daujat S."/>
            <person name="Bauer U.-M."/>
            <person name="Shah V."/>
            <person name="Turner B."/>
            <person name="Berger S."/>
            <person name="Kouzarides T."/>
        </authorList>
    </citation>
    <scope>FUNCTION IN METHYLATION OF HISTONE H3</scope>
</reference>
<reference key="8">
    <citation type="journal article" date="2002" name="EMBO Rep.">
        <title>Methylation at arginine 17 of histone H3 is linked to gene activation.</title>
        <authorList>
            <person name="Bauer U.-M."/>
            <person name="Daujat S."/>
            <person name="Nielsen S.J."/>
            <person name="Nightingale K."/>
            <person name="Kouzarides T."/>
        </authorList>
    </citation>
    <scope>FUNCTION IN METHYLATION OF HISTONE H3</scope>
</reference>
<reference key="9">
    <citation type="journal article" date="2002" name="EMBO Rep.">
        <title>PABP1 identified as an arginine methyltransferase substrate using high-density protein arrays.</title>
        <authorList>
            <person name="Lee J."/>
            <person name="Bedford M.T."/>
        </authorList>
    </citation>
    <scope>FUNCTION IN METHYLATION OF PABPC1</scope>
</reference>
<reference key="10">
    <citation type="journal article" date="2002" name="J. Biol. Chem.">
        <title>The coactivator-associated arginine methyltransferase is necessary for muscle differentiation: CARM1 coactivates myocyte enhancer factor-2.</title>
        <authorList>
            <person name="Chen S.L."/>
            <person name="Loffler K.A."/>
            <person name="Chen D."/>
            <person name="Stallcup M.R."/>
            <person name="Muscat G.E."/>
        </authorList>
    </citation>
    <scope>FUNCTION</scope>
    <scope>SUBCELLULAR LOCATION</scope>
    <scope>DEVELOPMENTAL STAGE</scope>
    <scope>INTERACTION WITH MEF2C</scope>
</reference>
<reference key="11">
    <citation type="journal article" date="2002" name="J. Biol. Chem.">
        <title>Synergistic coactivator function by coactivator-associated arginine methyltransferase (CARM) 1 and beta-catenin with two different classes of DNA-binding transcriptional activators.</title>
        <authorList>
            <person name="Koh S.S."/>
            <person name="Li H."/>
            <person name="Lee Y.-H."/>
            <person name="Widelitz R.B."/>
            <person name="Chuong C.-M."/>
            <person name="Stallcup M.R."/>
        </authorList>
    </citation>
    <scope>FUNCTION</scope>
    <scope>MUTAGENESIS OF GLU-267</scope>
    <scope>INTERACTION WITH CTNNB1</scope>
</reference>
<reference key="12">
    <citation type="journal article" date="2002" name="J. Biol. Chem.">
        <title>Lipopolysaccharide-induced methylation of HuR, an mRNA-stabilizing protein, by CARM1. Coactivator-associated arginine methyltransferase.</title>
        <authorList>
            <person name="Li H."/>
            <person name="Park S."/>
            <person name="Kilburn B."/>
            <person name="Jelinek M.A."/>
            <person name="Henschen-Edman A."/>
            <person name="Aswad D.W."/>
            <person name="Stallcup M.R."/>
            <person name="Laird-Offringa I.A."/>
        </authorList>
    </citation>
    <scope>FUNCTION</scope>
    <scope>METHYLATION OF ELAVL1</scope>
</reference>
<reference key="13">
    <citation type="journal article" date="2002" name="J. Biol. Chem.">
        <title>Requirement for multiple domains of the protein arginine methyltransferase CARM1 in its transcriptional coactivator function.</title>
        <authorList>
            <person name="Teyssier C."/>
            <person name="Chen D."/>
            <person name="Stallcup M.R."/>
        </authorList>
    </citation>
    <scope>CHARACTERIZATION</scope>
    <scope>HOMOOLIGOMERIZATION</scope>
</reference>
<reference key="14">
    <citation type="journal article" date="2002" name="Mol. Cell. Biol.">
        <title>Synergy among nuclear receptor coactivators: selective requirement for protein methyltransferase and acetyltransferase activities.</title>
        <authorList>
            <person name="Lee Y.-H."/>
            <person name="Koh S.S."/>
            <person name="Zhang X."/>
            <person name="Cheng X."/>
            <person name="Stallcup M.R."/>
        </authorList>
    </citation>
    <scope>FUNCTION</scope>
    <scope>IDENTIFICATION IN A COMPLEX WITH EP300 AND NCOA2</scope>
    <scope>MUTAGENESIS OF GLU-267</scope>
</reference>
<reference key="15">
    <citation type="journal article" date="2003" name="Proc. Natl. Acad. Sci. U.S.A.">
        <title>Specific protein methylation defects and gene expression perturbations in coactivator-associated arginine methyltransferase 1-deficient mice.</title>
        <authorList>
            <person name="Yadav N."/>
            <person name="Lee J."/>
            <person name="Kim J."/>
            <person name="Shen J."/>
            <person name="Hu M.C.-T."/>
            <person name="Aldaz C.M."/>
            <person name="Bedford M.T."/>
        </authorList>
    </citation>
    <scope>FUNCTION</scope>
    <scope>DISRUPTION PHENOTYPE</scope>
</reference>
<reference key="16">
    <citation type="journal article" date="2004" name="Cell">
        <title>Ordered cooperative functions of PRMT1, p300, and CARM1 in transcriptional activation by p53.</title>
        <authorList>
            <person name="An W."/>
            <person name="Kim J."/>
            <person name="Roeder R.G."/>
        </authorList>
    </citation>
    <scope>FUNCTION</scope>
    <scope>INTERACTION WITH TP53</scope>
</reference>
<reference key="17">
    <citation type="journal article" date="2004" name="Cell">
        <title>Histone deimination antagonizes arginine methylation.</title>
        <authorList>
            <person name="Cuthbert G.L."/>
            <person name="Daujat S."/>
            <person name="Snowden A.W."/>
            <person name="Erdjument-Bromage H."/>
            <person name="Hagiwara T."/>
            <person name="Yamada M."/>
            <person name="Schneider R."/>
            <person name="Gregory P.D."/>
            <person name="Tempst P."/>
            <person name="Bannister A.J."/>
            <person name="Kouzarides T."/>
        </authorList>
    </citation>
    <scope>FUNCTION IN METHYLATION OF HISTONE H3</scope>
</reference>
<reference key="18">
    <citation type="journal article" date="2004" name="Mol. Cell. Biol.">
        <title>Developmentally essential protein flightless I is a nuclear receptor coactivator with actin binding activity.</title>
        <authorList>
            <person name="Lee Y.-H."/>
            <person name="Campbell H.D."/>
            <person name="Stallcup M.R."/>
        </authorList>
    </citation>
    <scope>FUNCTION</scope>
    <scope>INTERACTION WITH FLII</scope>
</reference>
<reference key="19">
    <citation type="journal article" date="2005" name="EMBO J.">
        <title>Arginine methyltransferase CARM1 is a promoter-specific regulator of NF-kappaB-dependent gene expression.</title>
        <authorList>
            <person name="Covic M."/>
            <person name="Hassa P.O."/>
            <person name="Saccani S."/>
            <person name="Buerki C."/>
            <person name="Meier N.I."/>
            <person name="Lombardi C."/>
            <person name="Imhof R."/>
            <person name="Bedford M.T."/>
            <person name="Natoli G."/>
            <person name="Hottiger M.O."/>
        </authorList>
    </citation>
    <scope>FUNCTION IN METHYLATION OF HISTONE H3</scope>
    <scope>INTERACTION WITH RELA</scope>
</reference>
<reference key="20">
    <citation type="journal article" date="2006" name="Mol. Cell. Biol.">
        <title>CARM1 regulates proliferation of PC12 cells by methylating HuD.</title>
        <authorList>
            <person name="Fujiwara T."/>
            <person name="Mori Y."/>
            <person name="Chu D.L."/>
            <person name="Koyama Y."/>
            <person name="Miyata S."/>
            <person name="Tanaka H."/>
            <person name="Yachi K."/>
            <person name="Kubo T."/>
            <person name="Yoshikawa H."/>
            <person name="Tohyama M."/>
        </authorList>
    </citation>
    <scope>TISSUE SPECIFICITY</scope>
</reference>
<reference key="21">
    <citation type="journal article" date="2006" name="Mol. Endocrinol.">
        <title>Transcriptional intermediary factor 1alpha mediates physical interaction and functional synergy between the coactivator-associated arginine methyltransferase 1 and glucocorticoid receptor-interacting protein 1 nuclear receptor coactivators.</title>
        <authorList>
            <person name="Teyssier C."/>
            <person name="Ou C.Y."/>
            <person name="Khetchoumian K."/>
            <person name="Losson R."/>
            <person name="Stallcup M.R."/>
        </authorList>
    </citation>
    <scope>FUNCTION</scope>
    <scope>INTERACTION WITH TRIM24</scope>
    <scope>IDENTIFICATION IN A COMPLEX WITH TRIM24 AND NCOA2</scope>
</reference>
<reference key="22">
    <citation type="journal article" date="2007" name="Mol. Cell">
        <title>The arginine methyltransferase CARM1 regulates the coupling of transcription and mRNA processing.</title>
        <authorList>
            <person name="Cheng D."/>
            <person name="Cote J."/>
            <person name="Shaaban S."/>
            <person name="Bedford M.T."/>
        </authorList>
    </citation>
    <scope>FUNCTION</scope>
</reference>
<reference key="23">
    <citation type="journal article" date="2008" name="EMBO Rep.">
        <title>CARM1 promotes adipocyte differentiation by coactivating PPARgamma.</title>
        <authorList>
            <person name="Yadav N."/>
            <person name="Cheng D."/>
            <person name="Richard S."/>
            <person name="Morel M."/>
            <person name="Iyer V.R."/>
            <person name="Aldaz C.M."/>
            <person name="Bedford M.T."/>
        </authorList>
    </citation>
    <scope>DISRUPTION PHENOTYPE</scope>
    <scope>FUNCTION</scope>
</reference>
<reference key="24">
    <citation type="journal article" date="2009" name="J. Biol. Chem.">
        <title>Biochemical control of CARM1 enzymatic activity by phosphorylation.</title>
        <authorList>
            <person name="Feng Q."/>
            <person name="He B."/>
            <person name="Jung S.Y."/>
            <person name="Song Y."/>
            <person name="Qin J."/>
            <person name="Tsai S.Y."/>
            <person name="Tsai M.J."/>
            <person name="O'Malley B.W."/>
        </authorList>
    </citation>
    <scope>FUNCTION</scope>
    <scope>CATALYTIC ACTIVITY</scope>
    <scope>SUBUNIT</scope>
    <scope>INTERACTION WITH EP300 AND NCOA3</scope>
    <scope>SUBCELLULAR LOCATION</scope>
    <scope>MUTAGENESIS OF TYR-154; SER-217 AND SER-229</scope>
    <scope>PHOSPHORYLATION AT SER-217</scope>
</reference>
<reference key="25">
    <citation type="journal article" date="2010" name="Cell">
        <title>A tissue-specific atlas of mouse protein phosphorylation and expression.</title>
        <authorList>
            <person name="Huttlin E.L."/>
            <person name="Jedrychowski M.P."/>
            <person name="Elias J.E."/>
            <person name="Goswami T."/>
            <person name="Rad R."/>
            <person name="Beausoleil S.A."/>
            <person name="Villen J."/>
            <person name="Haas W."/>
            <person name="Sowa M.E."/>
            <person name="Gygi S.P."/>
        </authorList>
    </citation>
    <scope>IDENTIFICATION BY MASS SPECTROMETRY [LARGE SCALE ANALYSIS]</scope>
    <source>
        <tissue>Brain</tissue>
        <tissue>Heart</tissue>
        <tissue>Spleen</tissue>
        <tissue>Testis</tissue>
    </source>
</reference>
<reference key="26">
    <citation type="journal article" date="2010" name="J. Biol. Chem.">
        <title>Enzymatic activity is required for the in vivo functions of CARM1.</title>
        <authorList>
            <person name="Kim D."/>
            <person name="Lee J."/>
            <person name="Cheng D."/>
            <person name="Li J."/>
            <person name="Carter C."/>
            <person name="Richie E."/>
            <person name="Bedford M.T."/>
        </authorList>
    </citation>
    <scope>FUNCTION</scope>
    <scope>CATALYTIC ACTIVITY</scope>
    <scope>DISRUPTION PHENOTYPE</scope>
    <scope>SUBUNIT</scope>
    <scope>MUTAGENESIS OF ARG-169 AND TYR-173</scope>
</reference>
<reference key="27">
    <citation type="journal article" date="2011" name="Nucleic Acids Res.">
        <title>Automethylation of CARM1 allows coupling of transcription and mRNA splicing.</title>
        <authorList>
            <person name="Kuhn P."/>
            <person name="Chumanov R."/>
            <person name="Wang Y."/>
            <person name="Ge Y."/>
            <person name="Burgess R.R."/>
            <person name="Xu W."/>
        </authorList>
    </citation>
    <scope>METHYLATION AT ARG-551</scope>
    <scope>FUNCTION</scope>
    <scope>CATALYTIC ACTIVITY</scope>
    <scope>MUTAGENESIS OF ARG-551</scope>
    <scope>IDENTIFICATION BY MASS SPECTROMETRY</scope>
</reference>
<reference key="28">
    <citation type="journal article" date="2018" name="Genes Dev.">
        <title>A C9orf72-CARM1 axis regulates lipid metabolism under glucose starvation-induced nutrient stress.</title>
        <authorList>
            <person name="Liu Y."/>
            <person name="Wang T."/>
            <person name="Ji Y.J."/>
            <person name="Johnson K."/>
            <person name="Liu H."/>
            <person name="Johnson K."/>
            <person name="Bailey S."/>
            <person name="Suk Y."/>
            <person name="Lu Y.N."/>
            <person name="Liu M."/>
            <person name="Wang J."/>
        </authorList>
    </citation>
    <scope>FUNCTION</scope>
    <scope>INTERACTION WITH C9ORF72 AND SKP2</scope>
    <scope>SUBCELLULAR LOCATION</scope>
</reference>
<reference key="29">
    <citation type="journal article" date="2007" name="EMBO J.">
        <title>Insights into histone code syntax from structural and biochemical studies of CARM1 methyltransferase.</title>
        <authorList>
            <person name="Yue W.W."/>
            <person name="Hassler M."/>
            <person name="Roe S.M."/>
            <person name="Thompson-Vale V."/>
            <person name="Pearl L.H."/>
        </authorList>
    </citation>
    <scope>X-RAY CRYSTALLOGRAPHY (2.7 ANGSTROMS) OF 147-490 IN COMPLEX WITH S-ADENOSYL-L-HOMOCYSTEINE</scope>
    <scope>CATALYTIC ACTIVITY</scope>
    <scope>FUNCTION</scope>
    <scope>INTERACTION WITH NCOA2/GRIP1</scope>
    <scope>ACTIVITY REGULATION</scope>
    <scope>SUBUNIT</scope>
</reference>
<gene>
    <name type="primary">Carm1</name>
    <name type="synonym">Prmt4</name>
</gene>
<protein>
    <recommendedName>
        <fullName>Histone-arginine methyltransferase CARM1</fullName>
        <ecNumber evidence="5 23 25 26 27">2.1.1.319</ecNumber>
    </recommendedName>
    <alternativeName>
        <fullName>Coactivator-associated arginine methyltransferase 1</fullName>
    </alternativeName>
    <alternativeName>
        <fullName>Protein arginine N-methyltransferase 4</fullName>
    </alternativeName>
</protein>